<sequence>MADEDTAALVIDNGSGMCKAGFAGDDAPRAVFPSIVGRPRHQGVMVGMGQKDSYVGDEAQSKRGILTLKYPIEHGIVTNWDDMEKIWHHTFYNELRVAPEEHPVLLTEAPLNPKANREKMTQIMFETFNCPAMYVAIQAVLSLYASGRTTGVVLDSGDGVTHTVPIYEGYALPHAILRLDLAGRDLTDHLVKIMTERGYNFTTTAEREIARDIKEKLCYVALDFEQEMITSTSSAILERSYELPDGQLITIGNERFRCPEALFQPGFLGLEATGIHETTYNSIMKCDVDIRKDLYSNTVLSGGSTMFQGIAERMQREISSLAPTTVKIRIAAPPERKYSVWIGGSILASLSTFQQMWISKVEYEEIGPSIVHRKCF</sequence>
<comment type="function">
    <text>Actins are highly conserved proteins that are involved in various types of cell motility and are ubiquitously expressed in all eukaryotic cells.</text>
</comment>
<comment type="catalytic activity">
    <reaction evidence="1">
        <text>ATP + H2O = ADP + phosphate + H(+)</text>
        <dbReference type="Rhea" id="RHEA:13065"/>
        <dbReference type="ChEBI" id="CHEBI:15377"/>
        <dbReference type="ChEBI" id="CHEBI:15378"/>
        <dbReference type="ChEBI" id="CHEBI:30616"/>
        <dbReference type="ChEBI" id="CHEBI:43474"/>
        <dbReference type="ChEBI" id="CHEBI:456216"/>
    </reaction>
</comment>
<comment type="subcellular location">
    <subcellularLocation>
        <location>Cytoplasm</location>
        <location>Cytoskeleton</location>
    </subcellularLocation>
</comment>
<comment type="similarity">
    <text evidence="2">Belongs to the actin family.</text>
</comment>
<name>ACT2_ECHGR</name>
<protein>
    <recommendedName>
        <fullName>Actin-2</fullName>
        <ecNumber evidence="1">3.6.4.-</ecNumber>
    </recommendedName>
</protein>
<dbReference type="EC" id="3.6.4.-" evidence="1"/>
<dbReference type="EMBL" id="L07774">
    <property type="protein sequence ID" value="AAC80574.1"/>
    <property type="molecule type" value="Genomic_DNA"/>
</dbReference>
<dbReference type="SMR" id="Q03341"/>
<dbReference type="WBParaSite" id="EgrG_002050100">
    <property type="protein sequence ID" value="EgrG_002050100"/>
    <property type="gene ID" value="EgrG_002050100"/>
</dbReference>
<dbReference type="OrthoDB" id="10249208at2759"/>
<dbReference type="Proteomes" id="UP000492820">
    <property type="component" value="Unassembled WGS sequence"/>
</dbReference>
<dbReference type="GO" id="GO:0005737">
    <property type="term" value="C:cytoplasm"/>
    <property type="evidence" value="ECO:0007669"/>
    <property type="project" value="UniProtKB-KW"/>
</dbReference>
<dbReference type="GO" id="GO:0005856">
    <property type="term" value="C:cytoskeleton"/>
    <property type="evidence" value="ECO:0007669"/>
    <property type="project" value="UniProtKB-SubCell"/>
</dbReference>
<dbReference type="GO" id="GO:0005524">
    <property type="term" value="F:ATP binding"/>
    <property type="evidence" value="ECO:0007669"/>
    <property type="project" value="UniProtKB-KW"/>
</dbReference>
<dbReference type="GO" id="GO:0016787">
    <property type="term" value="F:hydrolase activity"/>
    <property type="evidence" value="ECO:0007669"/>
    <property type="project" value="UniProtKB-KW"/>
</dbReference>
<dbReference type="CDD" id="cd10224">
    <property type="entry name" value="ASKHA_NBD_actin"/>
    <property type="match status" value="1"/>
</dbReference>
<dbReference type="FunFam" id="3.30.420.40:FF:000291">
    <property type="entry name" value="Actin, alpha skeletal muscle"/>
    <property type="match status" value="1"/>
</dbReference>
<dbReference type="FunFam" id="3.90.640.10:FF:000047">
    <property type="entry name" value="Actin, alpha skeletal muscle"/>
    <property type="match status" value="1"/>
</dbReference>
<dbReference type="FunFam" id="3.30.420.40:FF:000404">
    <property type="entry name" value="Major actin"/>
    <property type="match status" value="1"/>
</dbReference>
<dbReference type="FunFam" id="3.30.420.40:FF:000058">
    <property type="entry name" value="Putative actin-related protein 5"/>
    <property type="match status" value="1"/>
</dbReference>
<dbReference type="Gene3D" id="3.30.420.40">
    <property type="match status" value="2"/>
</dbReference>
<dbReference type="Gene3D" id="3.90.640.10">
    <property type="entry name" value="Actin, Chain A, domain 4"/>
    <property type="match status" value="1"/>
</dbReference>
<dbReference type="InterPro" id="IPR004000">
    <property type="entry name" value="Actin"/>
</dbReference>
<dbReference type="InterPro" id="IPR020902">
    <property type="entry name" value="Actin/actin-like_CS"/>
</dbReference>
<dbReference type="InterPro" id="IPR004001">
    <property type="entry name" value="Actin_CS"/>
</dbReference>
<dbReference type="InterPro" id="IPR043129">
    <property type="entry name" value="ATPase_NBD"/>
</dbReference>
<dbReference type="PANTHER" id="PTHR11937">
    <property type="entry name" value="ACTIN"/>
    <property type="match status" value="1"/>
</dbReference>
<dbReference type="Pfam" id="PF00022">
    <property type="entry name" value="Actin"/>
    <property type="match status" value="1"/>
</dbReference>
<dbReference type="PRINTS" id="PR00190">
    <property type="entry name" value="ACTIN"/>
</dbReference>
<dbReference type="SMART" id="SM00268">
    <property type="entry name" value="ACTIN"/>
    <property type="match status" value="1"/>
</dbReference>
<dbReference type="SUPFAM" id="SSF53067">
    <property type="entry name" value="Actin-like ATPase domain"/>
    <property type="match status" value="2"/>
</dbReference>
<dbReference type="PROSITE" id="PS00406">
    <property type="entry name" value="ACTINS_1"/>
    <property type="match status" value="1"/>
</dbReference>
<dbReference type="PROSITE" id="PS00432">
    <property type="entry name" value="ACTINS_2"/>
    <property type="match status" value="1"/>
</dbReference>
<dbReference type="PROSITE" id="PS01132">
    <property type="entry name" value="ACTINS_ACT_LIKE"/>
    <property type="match status" value="1"/>
</dbReference>
<proteinExistence type="inferred from homology"/>
<reference key="1">
    <citation type="journal article" date="1993" name="Mol. Biochem. Parasitol.">
        <title>Molecular cloning and characterization of actin genes from Echinococcus granulosus.</title>
        <authorList>
            <person name="da Silva C.M."/>
            <person name="Ferreira H.B."/>
            <person name="Picon M."/>
            <person name="Gorfinkiel N."/>
            <person name="Ehrlich R."/>
            <person name="Zaha A."/>
        </authorList>
    </citation>
    <scope>NUCLEOTIDE SEQUENCE [GENOMIC DNA]</scope>
</reference>
<accession>Q03341</accession>
<feature type="chain" id="PRO_0000088934" description="Actin-2">
    <location>
        <begin position="1"/>
        <end position="376"/>
    </location>
</feature>
<gene>
    <name type="primary">ACTII</name>
</gene>
<evidence type="ECO:0000250" key="1">
    <source>
        <dbReference type="UniProtKB" id="P68137"/>
    </source>
</evidence>
<evidence type="ECO:0000305" key="2"/>
<keyword id="KW-0067">ATP-binding</keyword>
<keyword id="KW-0963">Cytoplasm</keyword>
<keyword id="KW-0206">Cytoskeleton</keyword>
<keyword id="KW-0378">Hydrolase</keyword>
<keyword id="KW-0547">Nucleotide-binding</keyword>
<organism>
    <name type="scientific">Echinococcus granulosus</name>
    <name type="common">Hydatid tapeworm</name>
    <dbReference type="NCBI Taxonomy" id="6210"/>
    <lineage>
        <taxon>Eukaryota</taxon>
        <taxon>Metazoa</taxon>
        <taxon>Spiralia</taxon>
        <taxon>Lophotrochozoa</taxon>
        <taxon>Platyhelminthes</taxon>
        <taxon>Cestoda</taxon>
        <taxon>Eucestoda</taxon>
        <taxon>Cyclophyllidea</taxon>
        <taxon>Taeniidae</taxon>
        <taxon>Echinococcus</taxon>
        <taxon>Echinococcus granulosus group</taxon>
    </lineage>
</organism>